<keyword id="KW-0002">3D-structure</keyword>
<keyword id="KW-0414">Isoprene biosynthesis</keyword>
<keyword id="KW-0464">Manganese</keyword>
<keyword id="KW-0479">Metal-binding</keyword>
<keyword id="KW-0521">NADP</keyword>
<keyword id="KW-0560">Oxidoreductase</keyword>
<keyword id="KW-1185">Reference proteome</keyword>
<protein>
    <recommendedName>
        <fullName evidence="1">1-deoxy-D-xylulose 5-phosphate reductoisomerase</fullName>
        <shortName evidence="1">DXP reductoisomerase</shortName>
        <ecNumber evidence="1">1.1.1.267</ecNumber>
    </recommendedName>
    <alternativeName>
        <fullName evidence="1">1-deoxyxylulose-5-phosphate reductoisomerase</fullName>
    </alternativeName>
    <alternativeName>
        <fullName evidence="1">2-C-methyl-D-erythritol 4-phosphate synthase</fullName>
    </alternativeName>
</protein>
<dbReference type="EC" id="1.1.1.267" evidence="1"/>
<dbReference type="EMBL" id="AL590842">
    <property type="protein sequence ID" value="CAL19713.1"/>
    <property type="molecule type" value="Genomic_DNA"/>
</dbReference>
<dbReference type="EMBL" id="AE009952">
    <property type="protein sequence ID" value="AAM86681.1"/>
    <property type="molecule type" value="Genomic_DNA"/>
</dbReference>
<dbReference type="EMBL" id="AE017042">
    <property type="protein sequence ID" value="AAS62986.1"/>
    <property type="status" value="ALT_INIT"/>
    <property type="molecule type" value="Genomic_DNA"/>
</dbReference>
<dbReference type="PIR" id="AG0128">
    <property type="entry name" value="AG0128"/>
</dbReference>
<dbReference type="RefSeq" id="YP_002346091.1">
    <property type="nucleotide sequence ID" value="NC_003143.1"/>
</dbReference>
<dbReference type="PDB" id="5DUL">
    <property type="method" value="X-ray"/>
    <property type="resolution" value="2.60 A"/>
    <property type="chains" value="A/B/C/D=1-398"/>
</dbReference>
<dbReference type="PDBsum" id="5DUL"/>
<dbReference type="SMR" id="Q8ZH62"/>
<dbReference type="STRING" id="214092.YPO1048"/>
<dbReference type="PaxDb" id="214092-YPO1048"/>
<dbReference type="DNASU" id="1148078"/>
<dbReference type="EnsemblBacteria" id="AAS62986">
    <property type="protein sequence ID" value="AAS62986"/>
    <property type="gene ID" value="YP_2802"/>
</dbReference>
<dbReference type="KEGG" id="ype:YPO1048"/>
<dbReference type="KEGG" id="ypk:y3131"/>
<dbReference type="KEGG" id="ypm:YP_2802"/>
<dbReference type="PATRIC" id="fig|214092.21.peg.1336"/>
<dbReference type="eggNOG" id="COG0743">
    <property type="taxonomic scope" value="Bacteria"/>
</dbReference>
<dbReference type="HOGENOM" id="CLU_035714_0_1_6"/>
<dbReference type="OMA" id="AHPNWVM"/>
<dbReference type="OrthoDB" id="9806546at2"/>
<dbReference type="BRENDA" id="1.1.1.267">
    <property type="organism ID" value="4559"/>
</dbReference>
<dbReference type="UniPathway" id="UPA00056">
    <property type="reaction ID" value="UER00092"/>
</dbReference>
<dbReference type="Proteomes" id="UP000000815">
    <property type="component" value="Chromosome"/>
</dbReference>
<dbReference type="Proteomes" id="UP000001019">
    <property type="component" value="Chromosome"/>
</dbReference>
<dbReference type="Proteomes" id="UP000002490">
    <property type="component" value="Chromosome"/>
</dbReference>
<dbReference type="GO" id="GO:0030604">
    <property type="term" value="F:1-deoxy-D-xylulose-5-phosphate reductoisomerase activity"/>
    <property type="evidence" value="ECO:0000318"/>
    <property type="project" value="GO_Central"/>
</dbReference>
<dbReference type="GO" id="GO:0030145">
    <property type="term" value="F:manganese ion binding"/>
    <property type="evidence" value="ECO:0000318"/>
    <property type="project" value="GO_Central"/>
</dbReference>
<dbReference type="GO" id="GO:0070402">
    <property type="term" value="F:NADPH binding"/>
    <property type="evidence" value="ECO:0000318"/>
    <property type="project" value="GO_Central"/>
</dbReference>
<dbReference type="GO" id="GO:0051484">
    <property type="term" value="P:isopentenyl diphosphate biosynthetic process, methylerythritol 4-phosphate pathway involved in terpenoid biosynthetic process"/>
    <property type="evidence" value="ECO:0000318"/>
    <property type="project" value="GO_Central"/>
</dbReference>
<dbReference type="FunFam" id="1.10.1740.10:FF:000004">
    <property type="entry name" value="1-deoxy-D-xylulose 5-phosphate reductoisomerase"/>
    <property type="match status" value="1"/>
</dbReference>
<dbReference type="FunFam" id="3.40.50.720:FF:000045">
    <property type="entry name" value="1-deoxy-D-xylulose 5-phosphate reductoisomerase"/>
    <property type="match status" value="1"/>
</dbReference>
<dbReference type="Gene3D" id="1.10.1740.10">
    <property type="match status" value="1"/>
</dbReference>
<dbReference type="Gene3D" id="3.40.50.720">
    <property type="entry name" value="NAD(P)-binding Rossmann-like Domain"/>
    <property type="match status" value="1"/>
</dbReference>
<dbReference type="HAMAP" id="MF_00183">
    <property type="entry name" value="DXP_reductoisom"/>
    <property type="match status" value="1"/>
</dbReference>
<dbReference type="InterPro" id="IPR003821">
    <property type="entry name" value="DXP_reductoisomerase"/>
</dbReference>
<dbReference type="InterPro" id="IPR013644">
    <property type="entry name" value="DXP_reductoisomerase_C"/>
</dbReference>
<dbReference type="InterPro" id="IPR013512">
    <property type="entry name" value="DXP_reductoisomerase_N"/>
</dbReference>
<dbReference type="InterPro" id="IPR026877">
    <property type="entry name" value="DXPR_C"/>
</dbReference>
<dbReference type="InterPro" id="IPR036169">
    <property type="entry name" value="DXPR_C_sf"/>
</dbReference>
<dbReference type="InterPro" id="IPR036291">
    <property type="entry name" value="NAD(P)-bd_dom_sf"/>
</dbReference>
<dbReference type="NCBIfam" id="TIGR00243">
    <property type="entry name" value="Dxr"/>
    <property type="match status" value="1"/>
</dbReference>
<dbReference type="NCBIfam" id="NF003938">
    <property type="entry name" value="PRK05447.1-1"/>
    <property type="match status" value="1"/>
</dbReference>
<dbReference type="NCBIfam" id="NF009114">
    <property type="entry name" value="PRK12464.1"/>
    <property type="match status" value="1"/>
</dbReference>
<dbReference type="PANTHER" id="PTHR30525">
    <property type="entry name" value="1-DEOXY-D-XYLULOSE 5-PHOSPHATE REDUCTOISOMERASE"/>
    <property type="match status" value="1"/>
</dbReference>
<dbReference type="PANTHER" id="PTHR30525:SF0">
    <property type="entry name" value="1-DEOXY-D-XYLULOSE 5-PHOSPHATE REDUCTOISOMERASE, CHLOROPLASTIC"/>
    <property type="match status" value="1"/>
</dbReference>
<dbReference type="Pfam" id="PF08436">
    <property type="entry name" value="DXP_redisom_C"/>
    <property type="match status" value="1"/>
</dbReference>
<dbReference type="Pfam" id="PF02670">
    <property type="entry name" value="DXP_reductoisom"/>
    <property type="match status" value="1"/>
</dbReference>
<dbReference type="Pfam" id="PF13288">
    <property type="entry name" value="DXPR_C"/>
    <property type="match status" value="1"/>
</dbReference>
<dbReference type="PIRSF" id="PIRSF006205">
    <property type="entry name" value="Dxp_reductismrs"/>
    <property type="match status" value="1"/>
</dbReference>
<dbReference type="SUPFAM" id="SSF69055">
    <property type="entry name" value="1-deoxy-D-xylulose-5-phosphate reductoisomerase, C-terminal domain"/>
    <property type="match status" value="1"/>
</dbReference>
<dbReference type="SUPFAM" id="SSF55347">
    <property type="entry name" value="Glyceraldehyde-3-phosphate dehydrogenase-like, C-terminal domain"/>
    <property type="match status" value="1"/>
</dbReference>
<dbReference type="SUPFAM" id="SSF51735">
    <property type="entry name" value="NAD(P)-binding Rossmann-fold domains"/>
    <property type="match status" value="1"/>
</dbReference>
<sequence length="398" mass="43115">MKQLTILGSTGSIGNSTLSVVRANPELFKVTALVAGRNVREMAQQCLEFSPRYAAMSDEHSAKSLRLLLAEQGSDTEVYSGETAACELAALDDVDQVMAAIVGIAGLPSTLAAIRAGKQVLLANKESLITCGKLFMDEVKRSRAQLLPIDSEHNAIFQSLPERIQRQLGYSSLNENGVSRIILTGSGGPFRETPLSQFSDVTPDQACAHPNWSMGRKISVDSATMMNKGLEYIEARWLFNASAEQIEVVLHPQSVIHSMVRYHDGSILAQMGTPDMRTPIAHAMAYPMRVSSGVAPLDFCKVGALTFTTPDYQRYPCLKLAIDACNAGQAATTALNAANEISVMAFLDSKIRFTDIEVINRTVVEGLLLSEPTSVEEVLVIDRKARDVAAQVIAKLNN</sequence>
<name>DXR_YERPE</name>
<gene>
    <name evidence="1" type="primary">dxr</name>
    <name type="ordered locus">YPO1048</name>
    <name type="ordered locus">y3131</name>
    <name type="ordered locus">YP_2802</name>
</gene>
<feature type="chain" id="PRO_0000163745" description="1-deoxy-D-xylulose 5-phosphate reductoisomerase">
    <location>
        <begin position="1"/>
        <end position="398"/>
    </location>
</feature>
<feature type="binding site" evidence="1">
    <location>
        <position position="10"/>
    </location>
    <ligand>
        <name>NADPH</name>
        <dbReference type="ChEBI" id="CHEBI:57783"/>
    </ligand>
</feature>
<feature type="binding site" evidence="1">
    <location>
        <position position="11"/>
    </location>
    <ligand>
        <name>NADPH</name>
        <dbReference type="ChEBI" id="CHEBI:57783"/>
    </ligand>
</feature>
<feature type="binding site" evidence="1">
    <location>
        <position position="12"/>
    </location>
    <ligand>
        <name>NADPH</name>
        <dbReference type="ChEBI" id="CHEBI:57783"/>
    </ligand>
</feature>
<feature type="binding site" evidence="1">
    <location>
        <position position="13"/>
    </location>
    <ligand>
        <name>NADPH</name>
        <dbReference type="ChEBI" id="CHEBI:57783"/>
    </ligand>
</feature>
<feature type="binding site" evidence="1">
    <location>
        <position position="36"/>
    </location>
    <ligand>
        <name>NADPH</name>
        <dbReference type="ChEBI" id="CHEBI:57783"/>
    </ligand>
</feature>
<feature type="binding site" evidence="1">
    <location>
        <position position="37"/>
    </location>
    <ligand>
        <name>NADPH</name>
        <dbReference type="ChEBI" id="CHEBI:57783"/>
    </ligand>
</feature>
<feature type="binding site" evidence="1">
    <location>
        <position position="38"/>
    </location>
    <ligand>
        <name>NADPH</name>
        <dbReference type="ChEBI" id="CHEBI:57783"/>
    </ligand>
</feature>
<feature type="binding site" evidence="1">
    <location>
        <position position="124"/>
    </location>
    <ligand>
        <name>NADPH</name>
        <dbReference type="ChEBI" id="CHEBI:57783"/>
    </ligand>
</feature>
<feature type="binding site" evidence="1">
    <location>
        <position position="125"/>
    </location>
    <ligand>
        <name>1-deoxy-D-xylulose 5-phosphate</name>
        <dbReference type="ChEBI" id="CHEBI:57792"/>
    </ligand>
</feature>
<feature type="binding site" evidence="1">
    <location>
        <position position="126"/>
    </location>
    <ligand>
        <name>NADPH</name>
        <dbReference type="ChEBI" id="CHEBI:57783"/>
    </ligand>
</feature>
<feature type="binding site" evidence="1">
    <location>
        <position position="150"/>
    </location>
    <ligand>
        <name>Mn(2+)</name>
        <dbReference type="ChEBI" id="CHEBI:29035"/>
    </ligand>
</feature>
<feature type="binding site" evidence="1">
    <location>
        <position position="151"/>
    </location>
    <ligand>
        <name>1-deoxy-D-xylulose 5-phosphate</name>
        <dbReference type="ChEBI" id="CHEBI:57792"/>
    </ligand>
</feature>
<feature type="binding site" evidence="1">
    <location>
        <position position="152"/>
    </location>
    <ligand>
        <name>1-deoxy-D-xylulose 5-phosphate</name>
        <dbReference type="ChEBI" id="CHEBI:57792"/>
    </ligand>
</feature>
<feature type="binding site" evidence="1">
    <location>
        <position position="152"/>
    </location>
    <ligand>
        <name>Mn(2+)</name>
        <dbReference type="ChEBI" id="CHEBI:29035"/>
    </ligand>
</feature>
<feature type="binding site" evidence="1">
    <location>
        <position position="186"/>
    </location>
    <ligand>
        <name>1-deoxy-D-xylulose 5-phosphate</name>
        <dbReference type="ChEBI" id="CHEBI:57792"/>
    </ligand>
</feature>
<feature type="binding site" evidence="1">
    <location>
        <position position="209"/>
    </location>
    <ligand>
        <name>1-deoxy-D-xylulose 5-phosphate</name>
        <dbReference type="ChEBI" id="CHEBI:57792"/>
    </ligand>
</feature>
<feature type="binding site" evidence="1">
    <location>
        <position position="215"/>
    </location>
    <ligand>
        <name>NADPH</name>
        <dbReference type="ChEBI" id="CHEBI:57783"/>
    </ligand>
</feature>
<feature type="binding site" evidence="1">
    <location>
        <position position="222"/>
    </location>
    <ligand>
        <name>1-deoxy-D-xylulose 5-phosphate</name>
        <dbReference type="ChEBI" id="CHEBI:57792"/>
    </ligand>
</feature>
<feature type="binding site" evidence="1">
    <location>
        <position position="227"/>
    </location>
    <ligand>
        <name>1-deoxy-D-xylulose 5-phosphate</name>
        <dbReference type="ChEBI" id="CHEBI:57792"/>
    </ligand>
</feature>
<feature type="binding site" evidence="1">
    <location>
        <position position="228"/>
    </location>
    <ligand>
        <name>1-deoxy-D-xylulose 5-phosphate</name>
        <dbReference type="ChEBI" id="CHEBI:57792"/>
    </ligand>
</feature>
<feature type="binding site" evidence="1">
    <location>
        <position position="231"/>
    </location>
    <ligand>
        <name>1-deoxy-D-xylulose 5-phosphate</name>
        <dbReference type="ChEBI" id="CHEBI:57792"/>
    </ligand>
</feature>
<feature type="binding site" evidence="1">
    <location>
        <position position="231"/>
    </location>
    <ligand>
        <name>Mn(2+)</name>
        <dbReference type="ChEBI" id="CHEBI:29035"/>
    </ligand>
</feature>
<feature type="strand" evidence="3">
    <location>
        <begin position="2"/>
        <end position="8"/>
    </location>
</feature>
<feature type="helix" evidence="3">
    <location>
        <begin position="12"/>
        <end position="23"/>
    </location>
</feature>
<feature type="turn" evidence="3">
    <location>
        <begin position="25"/>
        <end position="27"/>
    </location>
</feature>
<feature type="strand" evidence="3">
    <location>
        <begin position="28"/>
        <end position="34"/>
    </location>
</feature>
<feature type="helix" evidence="3">
    <location>
        <begin position="39"/>
        <end position="49"/>
    </location>
</feature>
<feature type="strand" evidence="3">
    <location>
        <begin position="52"/>
        <end position="58"/>
    </location>
</feature>
<feature type="helix" evidence="3">
    <location>
        <begin position="59"/>
        <end position="72"/>
    </location>
</feature>
<feature type="strand" evidence="3">
    <location>
        <begin position="77"/>
        <end position="81"/>
    </location>
</feature>
<feature type="helix" evidence="3">
    <location>
        <begin position="82"/>
        <end position="88"/>
    </location>
</feature>
<feature type="strand" evidence="3">
    <location>
        <begin position="96"/>
        <end position="99"/>
    </location>
</feature>
<feature type="helix" evidence="3">
    <location>
        <begin position="104"/>
        <end position="106"/>
    </location>
</feature>
<feature type="helix" evidence="3">
    <location>
        <begin position="107"/>
        <end position="115"/>
    </location>
</feature>
<feature type="strand" evidence="3">
    <location>
        <begin position="119"/>
        <end position="122"/>
    </location>
</feature>
<feature type="helix" evidence="3">
    <location>
        <begin position="125"/>
        <end position="130"/>
    </location>
</feature>
<feature type="helix" evidence="3">
    <location>
        <begin position="132"/>
        <end position="142"/>
    </location>
</feature>
<feature type="strand" evidence="3">
    <location>
        <begin position="145"/>
        <end position="148"/>
    </location>
</feature>
<feature type="helix" evidence="3">
    <location>
        <begin position="151"/>
        <end position="159"/>
    </location>
</feature>
<feature type="helix" evidence="3">
    <location>
        <begin position="162"/>
        <end position="165"/>
    </location>
</feature>
<feature type="turn" evidence="3">
    <location>
        <begin position="166"/>
        <end position="169"/>
    </location>
</feature>
<feature type="helix" evidence="3">
    <location>
        <begin position="174"/>
        <end position="176"/>
    </location>
</feature>
<feature type="strand" evidence="3">
    <location>
        <begin position="178"/>
        <end position="185"/>
    </location>
</feature>
<feature type="helix" evidence="3">
    <location>
        <begin position="195"/>
        <end position="197"/>
    </location>
</feature>
<feature type="turn" evidence="3">
    <location>
        <begin position="198"/>
        <end position="200"/>
    </location>
</feature>
<feature type="helix" evidence="3">
    <location>
        <begin position="204"/>
        <end position="207"/>
    </location>
</feature>
<feature type="helix" evidence="3">
    <location>
        <begin position="219"/>
        <end position="224"/>
    </location>
</feature>
<feature type="helix" evidence="3">
    <location>
        <begin position="226"/>
        <end position="238"/>
    </location>
</feature>
<feature type="helix" evidence="3">
    <location>
        <begin position="243"/>
        <end position="245"/>
    </location>
</feature>
<feature type="strand" evidence="3">
    <location>
        <begin position="246"/>
        <end position="250"/>
    </location>
</feature>
<feature type="strand" evidence="3">
    <location>
        <begin position="256"/>
        <end position="262"/>
    </location>
</feature>
<feature type="strand" evidence="3">
    <location>
        <begin position="267"/>
        <end position="271"/>
    </location>
</feature>
<feature type="helix" evidence="3">
    <location>
        <begin position="277"/>
        <end position="285"/>
    </location>
</feature>
<feature type="turn" evidence="3">
    <location>
        <begin position="312"/>
        <end position="314"/>
    </location>
</feature>
<feature type="helix" evidence="3">
    <location>
        <begin position="316"/>
        <end position="327"/>
    </location>
</feature>
<feature type="helix" evidence="3">
    <location>
        <begin position="329"/>
        <end position="347"/>
    </location>
</feature>
<feature type="helix" evidence="3">
    <location>
        <begin position="353"/>
        <end position="355"/>
    </location>
</feature>
<feature type="helix" evidence="3">
    <location>
        <begin position="356"/>
        <end position="366"/>
    </location>
</feature>
<feature type="helix" evidence="3">
    <location>
        <begin position="375"/>
        <end position="394"/>
    </location>
</feature>
<reference key="1">
    <citation type="journal article" date="2001" name="Nature">
        <title>Genome sequence of Yersinia pestis, the causative agent of plague.</title>
        <authorList>
            <person name="Parkhill J."/>
            <person name="Wren B.W."/>
            <person name="Thomson N.R."/>
            <person name="Titball R.W."/>
            <person name="Holden M.T.G."/>
            <person name="Prentice M.B."/>
            <person name="Sebaihia M."/>
            <person name="James K.D."/>
            <person name="Churcher C.M."/>
            <person name="Mungall K.L."/>
            <person name="Baker S."/>
            <person name="Basham D."/>
            <person name="Bentley S.D."/>
            <person name="Brooks K."/>
            <person name="Cerdeno-Tarraga A.-M."/>
            <person name="Chillingworth T."/>
            <person name="Cronin A."/>
            <person name="Davies R.M."/>
            <person name="Davis P."/>
            <person name="Dougan G."/>
            <person name="Feltwell T."/>
            <person name="Hamlin N."/>
            <person name="Holroyd S."/>
            <person name="Jagels K."/>
            <person name="Karlyshev A.V."/>
            <person name="Leather S."/>
            <person name="Moule S."/>
            <person name="Oyston P.C.F."/>
            <person name="Quail M.A."/>
            <person name="Rutherford K.M."/>
            <person name="Simmonds M."/>
            <person name="Skelton J."/>
            <person name="Stevens K."/>
            <person name="Whitehead S."/>
            <person name="Barrell B.G."/>
        </authorList>
    </citation>
    <scope>NUCLEOTIDE SEQUENCE [LARGE SCALE GENOMIC DNA]</scope>
    <source>
        <strain>CO-92 / Biovar Orientalis</strain>
    </source>
</reference>
<reference key="2">
    <citation type="journal article" date="2002" name="J. Bacteriol.">
        <title>Genome sequence of Yersinia pestis KIM.</title>
        <authorList>
            <person name="Deng W."/>
            <person name="Burland V."/>
            <person name="Plunkett G. III"/>
            <person name="Boutin A."/>
            <person name="Mayhew G.F."/>
            <person name="Liss P."/>
            <person name="Perna N.T."/>
            <person name="Rose D.J."/>
            <person name="Mau B."/>
            <person name="Zhou S."/>
            <person name="Schwartz D.C."/>
            <person name="Fetherston J.D."/>
            <person name="Lindler L.E."/>
            <person name="Brubaker R.R."/>
            <person name="Plano G.V."/>
            <person name="Straley S.C."/>
            <person name="McDonough K.A."/>
            <person name="Nilles M.L."/>
            <person name="Matson J.S."/>
            <person name="Blattner F.R."/>
            <person name="Perry R.D."/>
        </authorList>
    </citation>
    <scope>NUCLEOTIDE SEQUENCE [LARGE SCALE GENOMIC DNA]</scope>
    <source>
        <strain>KIM10+ / Biovar Mediaevalis</strain>
    </source>
</reference>
<reference key="3">
    <citation type="journal article" date="2004" name="DNA Res.">
        <title>Complete genome sequence of Yersinia pestis strain 91001, an isolate avirulent to humans.</title>
        <authorList>
            <person name="Song Y."/>
            <person name="Tong Z."/>
            <person name="Wang J."/>
            <person name="Wang L."/>
            <person name="Guo Z."/>
            <person name="Han Y."/>
            <person name="Zhang J."/>
            <person name="Pei D."/>
            <person name="Zhou D."/>
            <person name="Qin H."/>
            <person name="Pang X."/>
            <person name="Han Y."/>
            <person name="Zhai J."/>
            <person name="Li M."/>
            <person name="Cui B."/>
            <person name="Qi Z."/>
            <person name="Jin L."/>
            <person name="Dai R."/>
            <person name="Chen F."/>
            <person name="Li S."/>
            <person name="Ye C."/>
            <person name="Du Z."/>
            <person name="Lin W."/>
            <person name="Wang J."/>
            <person name="Yu J."/>
            <person name="Yang H."/>
            <person name="Wang J."/>
            <person name="Huang P."/>
            <person name="Yang R."/>
        </authorList>
    </citation>
    <scope>NUCLEOTIDE SEQUENCE [LARGE SCALE GENOMIC DNA]</scope>
    <source>
        <strain>91001 / Biovar Mediaevalis</strain>
    </source>
</reference>
<comment type="function">
    <text evidence="1">Catalyzes the NADPH-dependent rearrangement and reduction of 1-deoxy-D-xylulose-5-phosphate (DXP) to 2-C-methyl-D-erythritol 4-phosphate (MEP).</text>
</comment>
<comment type="catalytic activity">
    <reaction evidence="1">
        <text>2-C-methyl-D-erythritol 4-phosphate + NADP(+) = 1-deoxy-D-xylulose 5-phosphate + NADPH + H(+)</text>
        <dbReference type="Rhea" id="RHEA:13717"/>
        <dbReference type="ChEBI" id="CHEBI:15378"/>
        <dbReference type="ChEBI" id="CHEBI:57783"/>
        <dbReference type="ChEBI" id="CHEBI:57792"/>
        <dbReference type="ChEBI" id="CHEBI:58262"/>
        <dbReference type="ChEBI" id="CHEBI:58349"/>
        <dbReference type="EC" id="1.1.1.267"/>
    </reaction>
    <physiologicalReaction direction="right-to-left" evidence="1">
        <dbReference type="Rhea" id="RHEA:13719"/>
    </physiologicalReaction>
</comment>
<comment type="cofactor">
    <cofactor evidence="1">
        <name>Mg(2+)</name>
        <dbReference type="ChEBI" id="CHEBI:18420"/>
    </cofactor>
    <cofactor evidence="1">
        <name>Mn(2+)</name>
        <dbReference type="ChEBI" id="CHEBI:29035"/>
    </cofactor>
</comment>
<comment type="pathway">
    <text evidence="1">Isoprenoid biosynthesis; isopentenyl diphosphate biosynthesis via DXP pathway; isopentenyl diphosphate from 1-deoxy-D-xylulose 5-phosphate: step 1/6.</text>
</comment>
<comment type="subunit">
    <text evidence="1">Homodimer.</text>
</comment>
<comment type="similarity">
    <text evidence="1">Belongs to the DXR family.</text>
</comment>
<comment type="sequence caution" evidence="2">
    <conflict type="erroneous initiation">
        <sequence resource="EMBL-CDS" id="AAS62986"/>
    </conflict>
</comment>
<proteinExistence type="evidence at protein level"/>
<evidence type="ECO:0000255" key="1">
    <source>
        <dbReference type="HAMAP-Rule" id="MF_00183"/>
    </source>
</evidence>
<evidence type="ECO:0000305" key="2"/>
<evidence type="ECO:0007829" key="3">
    <source>
        <dbReference type="PDB" id="5DUL"/>
    </source>
</evidence>
<accession>Q8ZH62</accession>
<accession>Q0WHZ7</accession>
<organism>
    <name type="scientific">Yersinia pestis</name>
    <dbReference type="NCBI Taxonomy" id="632"/>
    <lineage>
        <taxon>Bacteria</taxon>
        <taxon>Pseudomonadati</taxon>
        <taxon>Pseudomonadota</taxon>
        <taxon>Gammaproteobacteria</taxon>
        <taxon>Enterobacterales</taxon>
        <taxon>Yersiniaceae</taxon>
        <taxon>Yersinia</taxon>
    </lineage>
</organism>